<proteinExistence type="inferred from homology"/>
<evidence type="ECO:0000255" key="1">
    <source>
        <dbReference type="HAMAP-Rule" id="MF_01302"/>
    </source>
</evidence>
<evidence type="ECO:0000305" key="2"/>
<dbReference type="EMBL" id="AP008957">
    <property type="protein sequence ID" value="BAH32575.1"/>
    <property type="molecule type" value="Genomic_DNA"/>
</dbReference>
<dbReference type="RefSeq" id="WP_003940873.1">
    <property type="nucleotide sequence ID" value="NC_012490.1"/>
</dbReference>
<dbReference type="SMR" id="C0ZW40"/>
<dbReference type="GeneID" id="93803290"/>
<dbReference type="KEGG" id="rer:RER_18670"/>
<dbReference type="eggNOG" id="COG0096">
    <property type="taxonomic scope" value="Bacteria"/>
</dbReference>
<dbReference type="HOGENOM" id="CLU_098428_0_1_11"/>
<dbReference type="Proteomes" id="UP000002204">
    <property type="component" value="Chromosome"/>
</dbReference>
<dbReference type="GO" id="GO:1990904">
    <property type="term" value="C:ribonucleoprotein complex"/>
    <property type="evidence" value="ECO:0007669"/>
    <property type="project" value="UniProtKB-KW"/>
</dbReference>
<dbReference type="GO" id="GO:0005840">
    <property type="term" value="C:ribosome"/>
    <property type="evidence" value="ECO:0007669"/>
    <property type="project" value="UniProtKB-KW"/>
</dbReference>
<dbReference type="GO" id="GO:0019843">
    <property type="term" value="F:rRNA binding"/>
    <property type="evidence" value="ECO:0007669"/>
    <property type="project" value="UniProtKB-UniRule"/>
</dbReference>
<dbReference type="GO" id="GO:0003735">
    <property type="term" value="F:structural constituent of ribosome"/>
    <property type="evidence" value="ECO:0007669"/>
    <property type="project" value="InterPro"/>
</dbReference>
<dbReference type="GO" id="GO:0006412">
    <property type="term" value="P:translation"/>
    <property type="evidence" value="ECO:0007669"/>
    <property type="project" value="UniProtKB-UniRule"/>
</dbReference>
<dbReference type="FunFam" id="3.30.1370.30:FF:000002">
    <property type="entry name" value="30S ribosomal protein S8"/>
    <property type="match status" value="1"/>
</dbReference>
<dbReference type="FunFam" id="3.30.1490.10:FF:000001">
    <property type="entry name" value="30S ribosomal protein S8"/>
    <property type="match status" value="1"/>
</dbReference>
<dbReference type="Gene3D" id="3.30.1370.30">
    <property type="match status" value="1"/>
</dbReference>
<dbReference type="Gene3D" id="3.30.1490.10">
    <property type="match status" value="1"/>
</dbReference>
<dbReference type="HAMAP" id="MF_01302_B">
    <property type="entry name" value="Ribosomal_uS8_B"/>
    <property type="match status" value="1"/>
</dbReference>
<dbReference type="InterPro" id="IPR000630">
    <property type="entry name" value="Ribosomal_uS8"/>
</dbReference>
<dbReference type="InterPro" id="IPR047863">
    <property type="entry name" value="Ribosomal_uS8_CS"/>
</dbReference>
<dbReference type="InterPro" id="IPR035987">
    <property type="entry name" value="Ribosomal_uS8_sf"/>
</dbReference>
<dbReference type="NCBIfam" id="NF001109">
    <property type="entry name" value="PRK00136.1"/>
    <property type="match status" value="1"/>
</dbReference>
<dbReference type="PANTHER" id="PTHR11758">
    <property type="entry name" value="40S RIBOSOMAL PROTEIN S15A"/>
    <property type="match status" value="1"/>
</dbReference>
<dbReference type="Pfam" id="PF00410">
    <property type="entry name" value="Ribosomal_S8"/>
    <property type="match status" value="1"/>
</dbReference>
<dbReference type="SUPFAM" id="SSF56047">
    <property type="entry name" value="Ribosomal protein S8"/>
    <property type="match status" value="1"/>
</dbReference>
<dbReference type="PROSITE" id="PS00053">
    <property type="entry name" value="RIBOSOMAL_S8"/>
    <property type="match status" value="1"/>
</dbReference>
<keyword id="KW-0687">Ribonucleoprotein</keyword>
<keyword id="KW-0689">Ribosomal protein</keyword>
<keyword id="KW-0694">RNA-binding</keyword>
<keyword id="KW-0699">rRNA-binding</keyword>
<accession>C0ZW40</accession>
<comment type="function">
    <text evidence="1">One of the primary rRNA binding proteins, it binds directly to 16S rRNA central domain where it helps coordinate assembly of the platform of the 30S subunit.</text>
</comment>
<comment type="subunit">
    <text evidence="1">Part of the 30S ribosomal subunit. Contacts proteins S5 and S12.</text>
</comment>
<comment type="similarity">
    <text evidence="1">Belongs to the universal ribosomal protein uS8 family.</text>
</comment>
<gene>
    <name evidence="1" type="primary">rpsH</name>
    <name type="ordered locus">RER_18670</name>
</gene>
<reference key="1">
    <citation type="submission" date="2005-03" db="EMBL/GenBank/DDBJ databases">
        <title>Comparison of the complete genome sequences of Rhodococcus erythropolis PR4 and Rhodococcus opacus B4.</title>
        <authorList>
            <person name="Takarada H."/>
            <person name="Sekine M."/>
            <person name="Hosoyama A."/>
            <person name="Yamada R."/>
            <person name="Fujisawa T."/>
            <person name="Omata S."/>
            <person name="Shimizu A."/>
            <person name="Tsukatani N."/>
            <person name="Tanikawa S."/>
            <person name="Fujita N."/>
            <person name="Harayama S."/>
        </authorList>
    </citation>
    <scope>NUCLEOTIDE SEQUENCE [LARGE SCALE GENOMIC DNA]</scope>
    <source>
        <strain>PR4 / NBRC 100887</strain>
    </source>
</reference>
<organism>
    <name type="scientific">Rhodococcus erythropolis (strain PR4 / NBRC 100887)</name>
    <dbReference type="NCBI Taxonomy" id="234621"/>
    <lineage>
        <taxon>Bacteria</taxon>
        <taxon>Bacillati</taxon>
        <taxon>Actinomycetota</taxon>
        <taxon>Actinomycetes</taxon>
        <taxon>Mycobacteriales</taxon>
        <taxon>Nocardiaceae</taxon>
        <taxon>Rhodococcus</taxon>
        <taxon>Rhodococcus erythropolis group</taxon>
    </lineage>
</organism>
<name>RS8_RHOE4</name>
<sequence length="132" mass="14400">MTMTDPIADFLTRLRNANTAYHDEVKLPHSKIKANIAEILKREGYISDFRTEDAEVGKTLIVDLKYGPSRERSLAGVRRVSKPGLRVYAKSTNLPKVLGGLGVAIISTSSGLLTDRQAANQGVGGEVLAYVW</sequence>
<feature type="chain" id="PRO_1000214262" description="Small ribosomal subunit protein uS8">
    <location>
        <begin position="1"/>
        <end position="132"/>
    </location>
</feature>
<protein>
    <recommendedName>
        <fullName evidence="1">Small ribosomal subunit protein uS8</fullName>
    </recommendedName>
    <alternativeName>
        <fullName evidence="2">30S ribosomal protein S8</fullName>
    </alternativeName>
</protein>